<gene>
    <name type="ORF">DDB_G0285583</name>
</gene>
<keyword id="KW-0175">Coiled coil</keyword>
<keyword id="KW-1185">Reference proteome</keyword>
<organism>
    <name type="scientific">Dictyostelium discoideum</name>
    <name type="common">Social amoeba</name>
    <dbReference type="NCBI Taxonomy" id="44689"/>
    <lineage>
        <taxon>Eukaryota</taxon>
        <taxon>Amoebozoa</taxon>
        <taxon>Evosea</taxon>
        <taxon>Eumycetozoa</taxon>
        <taxon>Dictyostelia</taxon>
        <taxon>Dictyosteliales</taxon>
        <taxon>Dictyosteliaceae</taxon>
        <taxon>Dictyostelium</taxon>
    </lineage>
</organism>
<proteinExistence type="inferred from homology"/>
<sequence length="93" mass="10969">MSLKEVITSLKNDFHSINKEIDSMKENNEKQEEKIFQEIKKLKLEMELLRKDNLSFKTTIQSLSDSINSLSSVESTYDSDIYYNDDEYSTIYL</sequence>
<evidence type="ECO:0000255" key="1"/>
<evidence type="ECO:0000305" key="2"/>
<dbReference type="EMBL" id="AAFI02000079">
    <property type="protein sequence ID" value="EAL64629.1"/>
    <property type="molecule type" value="Genomic_DNA"/>
</dbReference>
<dbReference type="RefSeq" id="XP_638140.1">
    <property type="nucleotide sequence ID" value="XM_633048.1"/>
</dbReference>
<dbReference type="SMR" id="Q54N03"/>
<dbReference type="PaxDb" id="44689-DDB0186585"/>
<dbReference type="EnsemblProtists" id="EAL64629">
    <property type="protein sequence ID" value="EAL64629"/>
    <property type="gene ID" value="DDB_G0285583"/>
</dbReference>
<dbReference type="GeneID" id="8625188"/>
<dbReference type="KEGG" id="ddi:DDB_G0285583"/>
<dbReference type="dictyBase" id="DDB_G0285583"/>
<dbReference type="VEuPathDB" id="AmoebaDB:DDB_G0285583"/>
<dbReference type="HOGENOM" id="CLU_186417_0_0_1"/>
<dbReference type="InParanoid" id="Q54N03"/>
<dbReference type="OMA" id="SPWQEIV"/>
<dbReference type="PRO" id="PR:Q54N03"/>
<dbReference type="Proteomes" id="UP000002195">
    <property type="component" value="Chromosome 4"/>
</dbReference>
<dbReference type="Gene3D" id="1.20.5.1700">
    <property type="match status" value="1"/>
</dbReference>
<feature type="chain" id="PRO_0000319970" description="UPF0521 protein B">
    <location>
        <begin position="1"/>
        <end position="93"/>
    </location>
</feature>
<feature type="coiled-coil region" evidence="1">
    <location>
        <begin position="2"/>
        <end position="58"/>
    </location>
</feature>
<reference key="1">
    <citation type="journal article" date="2005" name="Nature">
        <title>The genome of the social amoeba Dictyostelium discoideum.</title>
        <authorList>
            <person name="Eichinger L."/>
            <person name="Pachebat J.A."/>
            <person name="Gloeckner G."/>
            <person name="Rajandream M.A."/>
            <person name="Sucgang R."/>
            <person name="Berriman M."/>
            <person name="Song J."/>
            <person name="Olsen R."/>
            <person name="Szafranski K."/>
            <person name="Xu Q."/>
            <person name="Tunggal B."/>
            <person name="Kummerfeld S."/>
            <person name="Madera M."/>
            <person name="Konfortov B.A."/>
            <person name="Rivero F."/>
            <person name="Bankier A.T."/>
            <person name="Lehmann R."/>
            <person name="Hamlin N."/>
            <person name="Davies R."/>
            <person name="Gaudet P."/>
            <person name="Fey P."/>
            <person name="Pilcher K."/>
            <person name="Chen G."/>
            <person name="Saunders D."/>
            <person name="Sodergren E.J."/>
            <person name="Davis P."/>
            <person name="Kerhornou A."/>
            <person name="Nie X."/>
            <person name="Hall N."/>
            <person name="Anjard C."/>
            <person name="Hemphill L."/>
            <person name="Bason N."/>
            <person name="Farbrother P."/>
            <person name="Desany B."/>
            <person name="Just E."/>
            <person name="Morio T."/>
            <person name="Rost R."/>
            <person name="Churcher C.M."/>
            <person name="Cooper J."/>
            <person name="Haydock S."/>
            <person name="van Driessche N."/>
            <person name="Cronin A."/>
            <person name="Goodhead I."/>
            <person name="Muzny D.M."/>
            <person name="Mourier T."/>
            <person name="Pain A."/>
            <person name="Lu M."/>
            <person name="Harper D."/>
            <person name="Lindsay R."/>
            <person name="Hauser H."/>
            <person name="James K.D."/>
            <person name="Quiles M."/>
            <person name="Madan Babu M."/>
            <person name="Saito T."/>
            <person name="Buchrieser C."/>
            <person name="Wardroper A."/>
            <person name="Felder M."/>
            <person name="Thangavelu M."/>
            <person name="Johnson D."/>
            <person name="Knights A."/>
            <person name="Loulseged H."/>
            <person name="Mungall K.L."/>
            <person name="Oliver K."/>
            <person name="Price C."/>
            <person name="Quail M.A."/>
            <person name="Urushihara H."/>
            <person name="Hernandez J."/>
            <person name="Rabbinowitsch E."/>
            <person name="Steffen D."/>
            <person name="Sanders M."/>
            <person name="Ma J."/>
            <person name="Kohara Y."/>
            <person name="Sharp S."/>
            <person name="Simmonds M.N."/>
            <person name="Spiegler S."/>
            <person name="Tivey A."/>
            <person name="Sugano S."/>
            <person name="White B."/>
            <person name="Walker D."/>
            <person name="Woodward J.R."/>
            <person name="Winckler T."/>
            <person name="Tanaka Y."/>
            <person name="Shaulsky G."/>
            <person name="Schleicher M."/>
            <person name="Weinstock G.M."/>
            <person name="Rosenthal A."/>
            <person name="Cox E.C."/>
            <person name="Chisholm R.L."/>
            <person name="Gibbs R.A."/>
            <person name="Loomis W.F."/>
            <person name="Platzer M."/>
            <person name="Kay R.R."/>
            <person name="Williams J.G."/>
            <person name="Dear P.H."/>
            <person name="Noegel A.A."/>
            <person name="Barrell B.G."/>
            <person name="Kuspa A."/>
        </authorList>
    </citation>
    <scope>NUCLEOTIDE SEQUENCE [LARGE SCALE GENOMIC DNA]</scope>
    <source>
        <strain>AX4</strain>
    </source>
</reference>
<comment type="similarity">
    <text evidence="2">Belongs to the UPF0521 family.</text>
</comment>
<name>U521B_DICDI</name>
<accession>Q54N03</accession>
<protein>
    <recommendedName>
        <fullName>UPF0521 protein B</fullName>
    </recommendedName>
</protein>